<reference key="1">
    <citation type="submission" date="1997-02" db="EMBL/GenBank/DDBJ databases">
        <authorList>
            <person name="Kelner G.S."/>
            <person name="Maciejewski-Lenoir D."/>
            <person name="Lee E.D."/>
            <person name="Maki R.A."/>
        </authorList>
    </citation>
    <scope>NUCLEOTIDE SEQUENCE [MRNA]</scope>
    <source>
        <strain>Sprague-Dawley</strain>
    </source>
</reference>
<sequence length="130" mass="14263">MSFQLRSSARIPSRSCSSFTLLAFLLLFTLPQHRAQAAPFSAMVATELRCVCLTLAPRINPKMIANLEVIPAGPHCPKVEVIAKLKNQKDNVCLDPQAPLIKKVIQKILGSENKKTKRNALALVRSASTQ</sequence>
<keyword id="KW-0202">Cytokine</keyword>
<keyword id="KW-1015">Disulfide bond</keyword>
<keyword id="KW-1185">Reference proteome</keyword>
<keyword id="KW-0964">Secreted</keyword>
<keyword id="KW-0732">Signal</keyword>
<evidence type="ECO:0000250" key="1"/>
<evidence type="ECO:0000250" key="2">
    <source>
        <dbReference type="UniProtKB" id="P42830"/>
    </source>
</evidence>
<evidence type="ECO:0000305" key="3"/>
<name>CXCL5_RAT</name>
<organism>
    <name type="scientific">Rattus norvegicus</name>
    <name type="common">Rat</name>
    <dbReference type="NCBI Taxonomy" id="10116"/>
    <lineage>
        <taxon>Eukaryota</taxon>
        <taxon>Metazoa</taxon>
        <taxon>Chordata</taxon>
        <taxon>Craniata</taxon>
        <taxon>Vertebrata</taxon>
        <taxon>Euteleostomi</taxon>
        <taxon>Mammalia</taxon>
        <taxon>Eutheria</taxon>
        <taxon>Euarchontoglires</taxon>
        <taxon>Glires</taxon>
        <taxon>Rodentia</taxon>
        <taxon>Myomorpha</taxon>
        <taxon>Muroidea</taxon>
        <taxon>Muridae</taxon>
        <taxon>Murinae</taxon>
        <taxon>Rattus</taxon>
    </lineage>
</organism>
<comment type="function">
    <text evidence="1">May participate in the recruitment of inflammatory cells by injured or infected tissue.</text>
</comment>
<comment type="subunit">
    <text evidence="2">Monomer. Homodimer.</text>
</comment>
<comment type="subcellular location">
    <subcellularLocation>
        <location>Secreted</location>
    </subcellularLocation>
</comment>
<comment type="similarity">
    <text evidence="3">Belongs to the intercrine alpha (chemokine CxC) family.</text>
</comment>
<accession>P97885</accession>
<dbReference type="EMBL" id="U90448">
    <property type="protein sequence ID" value="AAB61460.1"/>
    <property type="molecule type" value="mRNA"/>
</dbReference>
<dbReference type="RefSeq" id="NP_071550.1">
    <property type="nucleotide sequence ID" value="NM_022214.1"/>
</dbReference>
<dbReference type="SMR" id="P97885"/>
<dbReference type="FunCoup" id="P97885">
    <property type="interactions" value="265"/>
</dbReference>
<dbReference type="STRING" id="10116.ENSRNOP00000003823"/>
<dbReference type="PhosphoSitePlus" id="P97885"/>
<dbReference type="PaxDb" id="10116-ENSRNOP00000003823"/>
<dbReference type="GeneID" id="60665"/>
<dbReference type="KEGG" id="rno:60665"/>
<dbReference type="UCSC" id="RGD:708540">
    <property type="organism name" value="rat"/>
</dbReference>
<dbReference type="AGR" id="RGD:708540"/>
<dbReference type="CTD" id="6372"/>
<dbReference type="RGD" id="708540">
    <property type="gene designation" value="Cxcl5"/>
</dbReference>
<dbReference type="eggNOG" id="ENOG502S7MM">
    <property type="taxonomic scope" value="Eukaryota"/>
</dbReference>
<dbReference type="InParanoid" id="P97885"/>
<dbReference type="PhylomeDB" id="P97885"/>
<dbReference type="Reactome" id="R-RNO-380108">
    <property type="pathway name" value="Chemokine receptors bind chemokines"/>
</dbReference>
<dbReference type="Reactome" id="R-RNO-418594">
    <property type="pathway name" value="G alpha (i) signalling events"/>
</dbReference>
<dbReference type="PRO" id="PR:P97885"/>
<dbReference type="Proteomes" id="UP000002494">
    <property type="component" value="Unplaced"/>
</dbReference>
<dbReference type="GO" id="GO:0005615">
    <property type="term" value="C:extracellular space"/>
    <property type="evidence" value="ECO:0000314"/>
    <property type="project" value="RGD"/>
</dbReference>
<dbReference type="GO" id="GO:0008009">
    <property type="term" value="F:chemokine activity"/>
    <property type="evidence" value="ECO:0000315"/>
    <property type="project" value="RGD"/>
</dbReference>
<dbReference type="GO" id="GO:0045236">
    <property type="term" value="F:CXCR chemokine receptor binding"/>
    <property type="evidence" value="ECO:0000318"/>
    <property type="project" value="GO_Central"/>
</dbReference>
<dbReference type="GO" id="GO:0031100">
    <property type="term" value="P:animal organ regeneration"/>
    <property type="evidence" value="ECO:0000315"/>
    <property type="project" value="RGD"/>
</dbReference>
<dbReference type="GO" id="GO:0061844">
    <property type="term" value="P:antimicrobial humoral immune response mediated by antimicrobial peptide"/>
    <property type="evidence" value="ECO:0000266"/>
    <property type="project" value="RGD"/>
</dbReference>
<dbReference type="GO" id="GO:0071222">
    <property type="term" value="P:cellular response to lipopolysaccharide"/>
    <property type="evidence" value="ECO:0000270"/>
    <property type="project" value="RGD"/>
</dbReference>
<dbReference type="GO" id="GO:0006954">
    <property type="term" value="P:inflammatory response"/>
    <property type="evidence" value="ECO:0000318"/>
    <property type="project" value="GO_Central"/>
</dbReference>
<dbReference type="GO" id="GO:0001776">
    <property type="term" value="P:leukocyte homeostasis"/>
    <property type="evidence" value="ECO:0000266"/>
    <property type="project" value="RGD"/>
</dbReference>
<dbReference type="GO" id="GO:0030901">
    <property type="term" value="P:midbrain development"/>
    <property type="evidence" value="ECO:0000270"/>
    <property type="project" value="RGD"/>
</dbReference>
<dbReference type="GO" id="GO:0042119">
    <property type="term" value="P:neutrophil activation"/>
    <property type="evidence" value="ECO:0000266"/>
    <property type="project" value="RGD"/>
</dbReference>
<dbReference type="GO" id="GO:0030593">
    <property type="term" value="P:neutrophil chemotaxis"/>
    <property type="evidence" value="ECO:0000266"/>
    <property type="project" value="RGD"/>
</dbReference>
<dbReference type="GO" id="GO:0010976">
    <property type="term" value="P:positive regulation of neuron projection development"/>
    <property type="evidence" value="ECO:0000315"/>
    <property type="project" value="RGD"/>
</dbReference>
<dbReference type="GO" id="GO:0046427">
    <property type="term" value="P:positive regulation of receptor signaling pathway via JAK-STAT"/>
    <property type="evidence" value="ECO:0000314"/>
    <property type="project" value="RGD"/>
</dbReference>
<dbReference type="GO" id="GO:0032642">
    <property type="term" value="P:regulation of chemokine production"/>
    <property type="evidence" value="ECO:0000266"/>
    <property type="project" value="RGD"/>
</dbReference>
<dbReference type="GO" id="GO:0070951">
    <property type="term" value="P:regulation of neutrophil mediated killing of gram-negative bacterium"/>
    <property type="evidence" value="ECO:0000266"/>
    <property type="project" value="RGD"/>
</dbReference>
<dbReference type="GO" id="GO:0010332">
    <property type="term" value="P:response to gamma radiation"/>
    <property type="evidence" value="ECO:0000270"/>
    <property type="project" value="RGD"/>
</dbReference>
<dbReference type="GO" id="GO:0032496">
    <property type="term" value="P:response to lipopolysaccharide"/>
    <property type="evidence" value="ECO:0000266"/>
    <property type="project" value="RGD"/>
</dbReference>
<dbReference type="CDD" id="cd00273">
    <property type="entry name" value="Chemokine_CXC"/>
    <property type="match status" value="1"/>
</dbReference>
<dbReference type="FunFam" id="2.40.50.40:FF:000004">
    <property type="entry name" value="C-X-C motif chemokine"/>
    <property type="match status" value="1"/>
</dbReference>
<dbReference type="Gene3D" id="2.40.50.40">
    <property type="match status" value="1"/>
</dbReference>
<dbReference type="InterPro" id="IPR039809">
    <property type="entry name" value="Chemokine_b/g/d"/>
</dbReference>
<dbReference type="InterPro" id="IPR001089">
    <property type="entry name" value="Chemokine_CXC"/>
</dbReference>
<dbReference type="InterPro" id="IPR018048">
    <property type="entry name" value="Chemokine_CXC_CS"/>
</dbReference>
<dbReference type="InterPro" id="IPR001811">
    <property type="entry name" value="Chemokine_IL8-like_dom"/>
</dbReference>
<dbReference type="InterPro" id="IPR033899">
    <property type="entry name" value="CXC_Chemokine_domain"/>
</dbReference>
<dbReference type="InterPro" id="IPR036048">
    <property type="entry name" value="Interleukin_8-like_sf"/>
</dbReference>
<dbReference type="PANTHER" id="PTHR12015:SF201">
    <property type="entry name" value="C-X-C MOTIF CHEMOKINE 6"/>
    <property type="match status" value="1"/>
</dbReference>
<dbReference type="PANTHER" id="PTHR12015">
    <property type="entry name" value="SMALL INDUCIBLE CYTOKINE A"/>
    <property type="match status" value="1"/>
</dbReference>
<dbReference type="Pfam" id="PF00048">
    <property type="entry name" value="IL8"/>
    <property type="match status" value="1"/>
</dbReference>
<dbReference type="PRINTS" id="PR00436">
    <property type="entry name" value="INTERLEUKIN8"/>
</dbReference>
<dbReference type="PRINTS" id="PR00437">
    <property type="entry name" value="SMALLCYTKCXC"/>
</dbReference>
<dbReference type="SMART" id="SM00199">
    <property type="entry name" value="SCY"/>
    <property type="match status" value="1"/>
</dbReference>
<dbReference type="SUPFAM" id="SSF54117">
    <property type="entry name" value="Interleukin 8-like chemokines"/>
    <property type="match status" value="1"/>
</dbReference>
<dbReference type="PROSITE" id="PS00471">
    <property type="entry name" value="SMALL_CYTOKINES_CXC"/>
    <property type="match status" value="1"/>
</dbReference>
<proteinExistence type="evidence at transcript level"/>
<gene>
    <name type="primary">Cxcl5</name>
    <name type="synonym">Scyb5</name>
</gene>
<protein>
    <recommendedName>
        <fullName>C-X-C motif chemokine 5</fullName>
    </recommendedName>
    <alternativeName>
        <fullName>Cytokine LIX</fullName>
    </alternativeName>
    <alternativeName>
        <fullName>Small-inducible cytokine B5</fullName>
    </alternativeName>
</protein>
<feature type="signal peptide" evidence="1">
    <location>
        <begin position="1"/>
        <end position="37"/>
    </location>
</feature>
<feature type="chain" id="PRO_0000005081" description="C-X-C motif chemokine 5">
    <location>
        <begin position="38"/>
        <end position="130"/>
    </location>
</feature>
<feature type="disulfide bond" evidence="2">
    <location>
        <begin position="50"/>
        <end position="76"/>
    </location>
</feature>
<feature type="disulfide bond" evidence="2">
    <location>
        <begin position="52"/>
        <end position="93"/>
    </location>
</feature>